<feature type="chain" id="PRO_0000046652" description="Asialoglycoprotein receptor 1">
    <location>
        <begin position="1"/>
        <end position="291"/>
    </location>
</feature>
<feature type="topological domain" description="Cytoplasmic" evidence="6">
    <location>
        <begin position="1"/>
        <end position="40"/>
    </location>
</feature>
<feature type="transmembrane region" description="Helical; Signal-anchor for type II membrane protein" evidence="6">
    <location>
        <begin position="41"/>
        <end position="61"/>
    </location>
</feature>
<feature type="topological domain" description="Extracellular" evidence="6">
    <location>
        <begin position="62"/>
        <end position="291"/>
    </location>
</feature>
<feature type="domain" description="C-type lectin" evidence="4">
    <location>
        <begin position="161"/>
        <end position="278"/>
    </location>
</feature>
<feature type="region of interest" description="Disordered" evidence="5">
    <location>
        <begin position="1"/>
        <end position="27"/>
    </location>
</feature>
<feature type="coiled-coil region" evidence="3">
    <location>
        <begin position="61"/>
        <end position="123"/>
    </location>
</feature>
<feature type="short sequence motif" description="Endocytosis signal" evidence="3">
    <location>
        <begin position="5"/>
        <end position="8"/>
    </location>
</feature>
<feature type="compositionally biased region" description="Basic and acidic residues" evidence="5">
    <location>
        <begin position="1"/>
        <end position="19"/>
    </location>
</feature>
<feature type="binding site" evidence="1">
    <location>
        <position position="191"/>
    </location>
    <ligand>
        <name>Ca(2+)</name>
        <dbReference type="ChEBI" id="CHEBI:29108"/>
        <label>1</label>
    </ligand>
</feature>
<feature type="binding site" evidence="1">
    <location>
        <position position="197"/>
    </location>
    <ligand>
        <name>Ca(2+)</name>
        <dbReference type="ChEBI" id="CHEBI:29108"/>
        <label>1</label>
    </ligand>
</feature>
<feature type="binding site" evidence="1">
    <location>
        <position position="216"/>
    </location>
    <ligand>
        <name>Ca(2+)</name>
        <dbReference type="ChEBI" id="CHEBI:29108"/>
        <label>2</label>
    </ligand>
</feature>
<feature type="binding site" evidence="1">
    <location>
        <position position="240"/>
    </location>
    <ligand>
        <name>Ca(2+)</name>
        <dbReference type="ChEBI" id="CHEBI:29108"/>
        <label>3</label>
    </ligand>
</feature>
<feature type="binding site" evidence="1">
    <location>
        <position position="242"/>
    </location>
    <ligand>
        <name>Ca(2+)</name>
        <dbReference type="ChEBI" id="CHEBI:29108"/>
        <label>3</label>
    </ligand>
</feature>
<feature type="binding site" evidence="1">
    <location>
        <position position="243"/>
    </location>
    <ligand>
        <name>Ca(2+)</name>
        <dbReference type="ChEBI" id="CHEBI:29108"/>
        <label>2</label>
    </ligand>
</feature>
<feature type="binding site" evidence="1">
    <location>
        <position position="253"/>
    </location>
    <ligand>
        <name>Ca(2+)</name>
        <dbReference type="ChEBI" id="CHEBI:29108"/>
        <label>2</label>
    </ligand>
</feature>
<feature type="binding site" evidence="1">
    <location>
        <position position="253"/>
    </location>
    <ligand>
        <name>Ca(2+)</name>
        <dbReference type="ChEBI" id="CHEBI:29108"/>
        <label>3</label>
    </ligand>
</feature>
<feature type="binding site" evidence="1">
    <location>
        <position position="254"/>
    </location>
    <ligand>
        <name>Ca(2+)</name>
        <dbReference type="ChEBI" id="CHEBI:29108"/>
        <label>2</label>
    </ligand>
</feature>
<feature type="binding site" evidence="1">
    <location>
        <position position="265"/>
    </location>
    <ligand>
        <name>Ca(2+)</name>
        <dbReference type="ChEBI" id="CHEBI:29108"/>
        <label>3</label>
    </ligand>
</feature>
<feature type="binding site" evidence="1">
    <location>
        <position position="266"/>
    </location>
    <ligand>
        <name>Ca(2+)</name>
        <dbReference type="ChEBI" id="CHEBI:29108"/>
        <label>3</label>
    </ligand>
</feature>
<feature type="binding site" evidence="1">
    <location>
        <position position="278"/>
    </location>
    <ligand>
        <name>Ca(2+)</name>
        <dbReference type="ChEBI" id="CHEBI:29108"/>
        <label>1</label>
    </ligand>
</feature>
<feature type="modified residue" description="Phosphoserine" evidence="2">
    <location>
        <position position="16"/>
    </location>
</feature>
<feature type="modified residue" description="Phosphoserine" evidence="2">
    <location>
        <position position="285"/>
    </location>
</feature>
<feature type="lipid moiety-binding region" description="S-palmitoyl cysteine" evidence="1">
    <location>
        <position position="36"/>
    </location>
</feature>
<feature type="glycosylation site" description="N-linked (GlcNAc...) asparagine" evidence="3">
    <location>
        <position position="79"/>
    </location>
</feature>
<feature type="glycosylation site" description="N-linked (GlcNAc...) asparagine" evidence="3">
    <location>
        <position position="147"/>
    </location>
</feature>
<feature type="disulfide bond" evidence="4">
    <location>
        <begin position="154"/>
        <end position="165"/>
    </location>
</feature>
<feature type="disulfide bond" evidence="4">
    <location>
        <begin position="182"/>
        <end position="277"/>
    </location>
</feature>
<feature type="disulfide bond" evidence="4">
    <location>
        <begin position="255"/>
        <end position="269"/>
    </location>
</feature>
<comment type="function">
    <text evidence="1">Mediates the endocytosis of plasma glycoproteins to which the terminal sialic acid residue on their complex carbohydrate moieties has been removed. The receptor recognizes terminal galactose and N-acetylgalactosamine units. After ligand binding to the receptor, the resulting complex is internalized and transported to a sorting organelle, where receptor and ligand are disassociated. The receptor then returns to the cell membrane surface (By similarity).</text>
</comment>
<comment type="subunit">
    <text evidence="1">Interacts with LASS2.</text>
</comment>
<comment type="subcellular location">
    <subcellularLocation>
        <location evidence="1">Membrane</location>
        <topology evidence="1">Single-pass type II membrane protein</topology>
    </subcellularLocation>
</comment>
<comment type="PTM">
    <text evidence="1">Phosphorylated on a cytoplasmic Ser residue.</text>
</comment>
<comment type="miscellaneous">
    <text evidence="1">Calcium is required for ligand binding.</text>
</comment>
<reference key="1">
    <citation type="submission" date="2004-11" db="EMBL/GenBank/DDBJ databases">
        <authorList>
            <consortium name="The German cDNA consortium"/>
        </authorList>
    </citation>
    <scope>NUCLEOTIDE SEQUENCE [LARGE SCALE MRNA]</scope>
    <source>
        <tissue>Liver</tissue>
    </source>
</reference>
<organism>
    <name type="scientific">Pongo abelii</name>
    <name type="common">Sumatran orangutan</name>
    <name type="synonym">Pongo pygmaeus abelii</name>
    <dbReference type="NCBI Taxonomy" id="9601"/>
    <lineage>
        <taxon>Eukaryota</taxon>
        <taxon>Metazoa</taxon>
        <taxon>Chordata</taxon>
        <taxon>Craniata</taxon>
        <taxon>Vertebrata</taxon>
        <taxon>Euteleostomi</taxon>
        <taxon>Mammalia</taxon>
        <taxon>Eutheria</taxon>
        <taxon>Euarchontoglires</taxon>
        <taxon>Primates</taxon>
        <taxon>Haplorrhini</taxon>
        <taxon>Catarrhini</taxon>
        <taxon>Hominidae</taxon>
        <taxon>Pongo</taxon>
    </lineage>
</organism>
<accession>Q5RBQ8</accession>
<proteinExistence type="evidence at transcript level"/>
<dbReference type="EMBL" id="CR858580">
    <property type="protein sequence ID" value="CAH90802.1"/>
    <property type="molecule type" value="mRNA"/>
</dbReference>
<dbReference type="RefSeq" id="NP_001125456.1">
    <property type="nucleotide sequence ID" value="NM_001131984.1"/>
</dbReference>
<dbReference type="SMR" id="Q5RBQ8"/>
<dbReference type="FunCoup" id="Q5RBQ8">
    <property type="interactions" value="382"/>
</dbReference>
<dbReference type="STRING" id="9601.ENSPPYP00000008884"/>
<dbReference type="GlyCosmos" id="Q5RBQ8">
    <property type="glycosylation" value="2 sites, No reported glycans"/>
</dbReference>
<dbReference type="GeneID" id="100172364"/>
<dbReference type="KEGG" id="pon:100172364"/>
<dbReference type="CTD" id="432"/>
<dbReference type="eggNOG" id="KOG4297">
    <property type="taxonomic scope" value="Eukaryota"/>
</dbReference>
<dbReference type="InParanoid" id="Q5RBQ8"/>
<dbReference type="OrthoDB" id="2142683at2759"/>
<dbReference type="Proteomes" id="UP000001595">
    <property type="component" value="Unplaced"/>
</dbReference>
<dbReference type="GO" id="GO:0016020">
    <property type="term" value="C:membrane"/>
    <property type="evidence" value="ECO:0007669"/>
    <property type="project" value="UniProtKB-SubCell"/>
</dbReference>
<dbReference type="GO" id="GO:0030246">
    <property type="term" value="F:carbohydrate binding"/>
    <property type="evidence" value="ECO:0007669"/>
    <property type="project" value="UniProtKB-KW"/>
</dbReference>
<dbReference type="GO" id="GO:0046872">
    <property type="term" value="F:metal ion binding"/>
    <property type="evidence" value="ECO:0007669"/>
    <property type="project" value="UniProtKB-KW"/>
</dbReference>
<dbReference type="GO" id="GO:0006897">
    <property type="term" value="P:endocytosis"/>
    <property type="evidence" value="ECO:0007669"/>
    <property type="project" value="UniProtKB-KW"/>
</dbReference>
<dbReference type="CDD" id="cd03590">
    <property type="entry name" value="CLECT_DC-SIGN_like"/>
    <property type="match status" value="1"/>
</dbReference>
<dbReference type="FunFam" id="3.10.100.10:FF:000041">
    <property type="entry name" value="Asialoglycoprotein receptor 1"/>
    <property type="match status" value="1"/>
</dbReference>
<dbReference type="Gene3D" id="3.10.100.10">
    <property type="entry name" value="Mannose-Binding Protein A, subunit A"/>
    <property type="match status" value="1"/>
</dbReference>
<dbReference type="InterPro" id="IPR001304">
    <property type="entry name" value="C-type_lectin-like"/>
</dbReference>
<dbReference type="InterPro" id="IPR016186">
    <property type="entry name" value="C-type_lectin-like/link_sf"/>
</dbReference>
<dbReference type="InterPro" id="IPR050111">
    <property type="entry name" value="C-type_lectin/snaclec_domain"/>
</dbReference>
<dbReference type="InterPro" id="IPR018378">
    <property type="entry name" value="C-type_lectin_CS"/>
</dbReference>
<dbReference type="InterPro" id="IPR033989">
    <property type="entry name" value="CD209-like_CTLD"/>
</dbReference>
<dbReference type="InterPro" id="IPR016187">
    <property type="entry name" value="CTDL_fold"/>
</dbReference>
<dbReference type="PANTHER" id="PTHR22803">
    <property type="entry name" value="MANNOSE, PHOSPHOLIPASE, LECTIN RECEPTOR RELATED"/>
    <property type="match status" value="1"/>
</dbReference>
<dbReference type="Pfam" id="PF00059">
    <property type="entry name" value="Lectin_C"/>
    <property type="match status" value="1"/>
</dbReference>
<dbReference type="Pfam" id="PF03954">
    <property type="entry name" value="Lectin_N"/>
    <property type="match status" value="1"/>
</dbReference>
<dbReference type="SMART" id="SM00034">
    <property type="entry name" value="CLECT"/>
    <property type="match status" value="1"/>
</dbReference>
<dbReference type="SUPFAM" id="SSF56436">
    <property type="entry name" value="C-type lectin-like"/>
    <property type="match status" value="1"/>
</dbReference>
<dbReference type="PROSITE" id="PS00615">
    <property type="entry name" value="C_TYPE_LECTIN_1"/>
    <property type="match status" value="1"/>
</dbReference>
<dbReference type="PROSITE" id="PS50041">
    <property type="entry name" value="C_TYPE_LECTIN_2"/>
    <property type="match status" value="1"/>
</dbReference>
<evidence type="ECO:0000250" key="1"/>
<evidence type="ECO:0000250" key="2">
    <source>
        <dbReference type="UniProtKB" id="P07306"/>
    </source>
</evidence>
<evidence type="ECO:0000255" key="3"/>
<evidence type="ECO:0000255" key="4">
    <source>
        <dbReference type="PROSITE-ProRule" id="PRU00040"/>
    </source>
</evidence>
<evidence type="ECO:0000256" key="5">
    <source>
        <dbReference type="SAM" id="MobiDB-lite"/>
    </source>
</evidence>
<evidence type="ECO:0000305" key="6"/>
<name>ASGR1_PONAB</name>
<gene>
    <name type="primary">ASGR1</name>
</gene>
<protein>
    <recommendedName>
        <fullName>Asialoglycoprotein receptor 1</fullName>
        <shortName>ASGP-R 1</shortName>
        <shortName>ASGPR 1</shortName>
    </recommendedName>
</protein>
<sequence>MTKECQDLQHLDNEESDHHQLRKGPPPSQPLLQRLCSGPRLLLLSLGLSLLLLVVVCVIGSQNSQLQKELRGLRETFSNFTASTEAQVKGLSTQGGNVGRKMKSLESQLEKQQKDLSEDHSSLLLHVKQFVSDLRSLSCQMAALQGNGSERACCPVNWVEHERSCYWFSRSGKAWADADNYCRLEDAHLVVVTSWEEQKFVQHHTGPVNTWMGLHDQNGPWKWVDGTDYETGFKNWRPEQPDDWYGHGLGGGEDCAHFTDDGRWNDDVCQRPYRWVCETELDKASQEPPLL</sequence>
<keyword id="KW-0106">Calcium</keyword>
<keyword id="KW-0175">Coiled coil</keyword>
<keyword id="KW-1015">Disulfide bond</keyword>
<keyword id="KW-0254">Endocytosis</keyword>
<keyword id="KW-0325">Glycoprotein</keyword>
<keyword id="KW-0430">Lectin</keyword>
<keyword id="KW-0449">Lipoprotein</keyword>
<keyword id="KW-0472">Membrane</keyword>
<keyword id="KW-0479">Metal-binding</keyword>
<keyword id="KW-0564">Palmitate</keyword>
<keyword id="KW-0597">Phosphoprotein</keyword>
<keyword id="KW-0675">Receptor</keyword>
<keyword id="KW-1185">Reference proteome</keyword>
<keyword id="KW-0735">Signal-anchor</keyword>
<keyword id="KW-0812">Transmembrane</keyword>
<keyword id="KW-1133">Transmembrane helix</keyword>